<name>LIPA_SHEB5</name>
<sequence>MNRPERLQPGVKLRDADKVSRIPVKIVPSERDTMLRKPDWLRVKLPASNQRILEIKQALRKNGLHSVCEEASCPNLAECFNHGTATFMILGAICTRRCPFCDVAHGRPLKPDAEEPVKLAQTIRDMKLKYVVITSVDRDDLRDGGAQHFADCIREIRKLNPDIKIETLVPDFRGRIDAALDILSTEPPDVFNHNLETAPMHYRKARPGANYQWSLDLLKRFKERHPNVPTKSGLMMGLGETNEEIAQVLRDLRAHNVEMLTLGQYLQPSKFHLPVERYVPPAEFDELKALADELGFTHAACGPLVRSSYHADLQAQGKEVK</sequence>
<protein>
    <recommendedName>
        <fullName evidence="1">Lipoyl synthase</fullName>
        <ecNumber evidence="1">2.8.1.8</ecNumber>
    </recommendedName>
    <alternativeName>
        <fullName evidence="1">Lip-syn</fullName>
        <shortName evidence="1">LS</shortName>
    </alternativeName>
    <alternativeName>
        <fullName evidence="1">Lipoate synthase</fullName>
    </alternativeName>
    <alternativeName>
        <fullName evidence="1">Lipoic acid synthase</fullName>
    </alternativeName>
    <alternativeName>
        <fullName evidence="1">Sulfur insertion protein LipA</fullName>
    </alternativeName>
</protein>
<dbReference type="EC" id="2.8.1.8" evidence="1"/>
<dbReference type="EMBL" id="CP000563">
    <property type="protein sequence ID" value="ABN62762.1"/>
    <property type="molecule type" value="Genomic_DNA"/>
</dbReference>
<dbReference type="RefSeq" id="WP_006082760.1">
    <property type="nucleotide sequence ID" value="NC_009052.1"/>
</dbReference>
<dbReference type="SMR" id="A3D7P9"/>
<dbReference type="STRING" id="325240.Sbal_3282"/>
<dbReference type="GeneID" id="11773506"/>
<dbReference type="KEGG" id="sbl:Sbal_3282"/>
<dbReference type="HOGENOM" id="CLU_033144_2_1_6"/>
<dbReference type="OrthoDB" id="9787898at2"/>
<dbReference type="UniPathway" id="UPA00538">
    <property type="reaction ID" value="UER00593"/>
</dbReference>
<dbReference type="Proteomes" id="UP000001557">
    <property type="component" value="Chromosome"/>
</dbReference>
<dbReference type="GO" id="GO:0005737">
    <property type="term" value="C:cytoplasm"/>
    <property type="evidence" value="ECO:0007669"/>
    <property type="project" value="UniProtKB-SubCell"/>
</dbReference>
<dbReference type="GO" id="GO:0051539">
    <property type="term" value="F:4 iron, 4 sulfur cluster binding"/>
    <property type="evidence" value="ECO:0007669"/>
    <property type="project" value="UniProtKB-UniRule"/>
</dbReference>
<dbReference type="GO" id="GO:0016992">
    <property type="term" value="F:lipoate synthase activity"/>
    <property type="evidence" value="ECO:0007669"/>
    <property type="project" value="UniProtKB-UniRule"/>
</dbReference>
<dbReference type="GO" id="GO:0046872">
    <property type="term" value="F:metal ion binding"/>
    <property type="evidence" value="ECO:0007669"/>
    <property type="project" value="UniProtKB-KW"/>
</dbReference>
<dbReference type="CDD" id="cd01335">
    <property type="entry name" value="Radical_SAM"/>
    <property type="match status" value="1"/>
</dbReference>
<dbReference type="FunFam" id="3.20.20.70:FF:000023">
    <property type="entry name" value="Lipoyl synthase"/>
    <property type="match status" value="1"/>
</dbReference>
<dbReference type="Gene3D" id="3.20.20.70">
    <property type="entry name" value="Aldolase class I"/>
    <property type="match status" value="1"/>
</dbReference>
<dbReference type="HAMAP" id="MF_00206">
    <property type="entry name" value="Lipoyl_synth"/>
    <property type="match status" value="1"/>
</dbReference>
<dbReference type="InterPro" id="IPR013785">
    <property type="entry name" value="Aldolase_TIM"/>
</dbReference>
<dbReference type="InterPro" id="IPR006638">
    <property type="entry name" value="Elp3/MiaA/NifB-like_rSAM"/>
</dbReference>
<dbReference type="InterPro" id="IPR003698">
    <property type="entry name" value="Lipoyl_synth"/>
</dbReference>
<dbReference type="InterPro" id="IPR007197">
    <property type="entry name" value="rSAM"/>
</dbReference>
<dbReference type="NCBIfam" id="TIGR00510">
    <property type="entry name" value="lipA"/>
    <property type="match status" value="1"/>
</dbReference>
<dbReference type="NCBIfam" id="NF004019">
    <property type="entry name" value="PRK05481.1"/>
    <property type="match status" value="1"/>
</dbReference>
<dbReference type="NCBIfam" id="NF009544">
    <property type="entry name" value="PRK12928.1"/>
    <property type="match status" value="1"/>
</dbReference>
<dbReference type="PANTHER" id="PTHR10949">
    <property type="entry name" value="LIPOYL SYNTHASE"/>
    <property type="match status" value="1"/>
</dbReference>
<dbReference type="PANTHER" id="PTHR10949:SF0">
    <property type="entry name" value="LIPOYL SYNTHASE, MITOCHONDRIAL"/>
    <property type="match status" value="1"/>
</dbReference>
<dbReference type="Pfam" id="PF04055">
    <property type="entry name" value="Radical_SAM"/>
    <property type="match status" value="1"/>
</dbReference>
<dbReference type="PIRSF" id="PIRSF005963">
    <property type="entry name" value="Lipoyl_synth"/>
    <property type="match status" value="1"/>
</dbReference>
<dbReference type="SFLD" id="SFLDF00271">
    <property type="entry name" value="lipoyl_synthase"/>
    <property type="match status" value="1"/>
</dbReference>
<dbReference type="SFLD" id="SFLDS00029">
    <property type="entry name" value="Radical_SAM"/>
    <property type="match status" value="1"/>
</dbReference>
<dbReference type="SMART" id="SM00729">
    <property type="entry name" value="Elp3"/>
    <property type="match status" value="1"/>
</dbReference>
<dbReference type="SUPFAM" id="SSF102114">
    <property type="entry name" value="Radical SAM enzymes"/>
    <property type="match status" value="1"/>
</dbReference>
<dbReference type="PROSITE" id="PS51918">
    <property type="entry name" value="RADICAL_SAM"/>
    <property type="match status" value="1"/>
</dbReference>
<reference key="1">
    <citation type="submission" date="2007-02" db="EMBL/GenBank/DDBJ databases">
        <title>Complete sequence of chromosome of Shewanella baltica OS155.</title>
        <authorList>
            <consortium name="US DOE Joint Genome Institute"/>
            <person name="Copeland A."/>
            <person name="Lucas S."/>
            <person name="Lapidus A."/>
            <person name="Barry K."/>
            <person name="Detter J.C."/>
            <person name="Glavina del Rio T."/>
            <person name="Hammon N."/>
            <person name="Israni S."/>
            <person name="Dalin E."/>
            <person name="Tice H."/>
            <person name="Pitluck S."/>
            <person name="Sims D.R."/>
            <person name="Brettin T."/>
            <person name="Bruce D."/>
            <person name="Han C."/>
            <person name="Tapia R."/>
            <person name="Brainard J."/>
            <person name="Schmutz J."/>
            <person name="Larimer F."/>
            <person name="Land M."/>
            <person name="Hauser L."/>
            <person name="Kyrpides N."/>
            <person name="Mikhailova N."/>
            <person name="Brettar I."/>
            <person name="Klappenbach J."/>
            <person name="Konstantinidis K."/>
            <person name="Rodrigues J."/>
            <person name="Tiedje J."/>
            <person name="Richardson P."/>
        </authorList>
    </citation>
    <scope>NUCLEOTIDE SEQUENCE [LARGE SCALE GENOMIC DNA]</scope>
    <source>
        <strain>OS155 / ATCC BAA-1091</strain>
    </source>
</reference>
<gene>
    <name evidence="1" type="primary">lipA</name>
    <name type="ordered locus">Sbal_3282</name>
</gene>
<proteinExistence type="inferred from homology"/>
<organism>
    <name type="scientific">Shewanella baltica (strain OS155 / ATCC BAA-1091)</name>
    <dbReference type="NCBI Taxonomy" id="325240"/>
    <lineage>
        <taxon>Bacteria</taxon>
        <taxon>Pseudomonadati</taxon>
        <taxon>Pseudomonadota</taxon>
        <taxon>Gammaproteobacteria</taxon>
        <taxon>Alteromonadales</taxon>
        <taxon>Shewanellaceae</taxon>
        <taxon>Shewanella</taxon>
    </lineage>
</organism>
<feature type="chain" id="PRO_1000012272" description="Lipoyl synthase">
    <location>
        <begin position="1"/>
        <end position="321"/>
    </location>
</feature>
<feature type="domain" description="Radical SAM core" evidence="2">
    <location>
        <begin position="80"/>
        <end position="297"/>
    </location>
</feature>
<feature type="binding site" evidence="1">
    <location>
        <position position="68"/>
    </location>
    <ligand>
        <name>[4Fe-4S] cluster</name>
        <dbReference type="ChEBI" id="CHEBI:49883"/>
        <label>1</label>
    </ligand>
</feature>
<feature type="binding site" evidence="1">
    <location>
        <position position="73"/>
    </location>
    <ligand>
        <name>[4Fe-4S] cluster</name>
        <dbReference type="ChEBI" id="CHEBI:49883"/>
        <label>1</label>
    </ligand>
</feature>
<feature type="binding site" evidence="1">
    <location>
        <position position="79"/>
    </location>
    <ligand>
        <name>[4Fe-4S] cluster</name>
        <dbReference type="ChEBI" id="CHEBI:49883"/>
        <label>1</label>
    </ligand>
</feature>
<feature type="binding site" evidence="1">
    <location>
        <position position="94"/>
    </location>
    <ligand>
        <name>[4Fe-4S] cluster</name>
        <dbReference type="ChEBI" id="CHEBI:49883"/>
        <label>2</label>
        <note>4Fe-4S-S-AdoMet</note>
    </ligand>
</feature>
<feature type="binding site" evidence="1">
    <location>
        <position position="98"/>
    </location>
    <ligand>
        <name>[4Fe-4S] cluster</name>
        <dbReference type="ChEBI" id="CHEBI:49883"/>
        <label>2</label>
        <note>4Fe-4S-S-AdoMet</note>
    </ligand>
</feature>
<feature type="binding site" evidence="1">
    <location>
        <position position="101"/>
    </location>
    <ligand>
        <name>[4Fe-4S] cluster</name>
        <dbReference type="ChEBI" id="CHEBI:49883"/>
        <label>2</label>
        <note>4Fe-4S-S-AdoMet</note>
    </ligand>
</feature>
<feature type="binding site" evidence="1">
    <location>
        <position position="308"/>
    </location>
    <ligand>
        <name>[4Fe-4S] cluster</name>
        <dbReference type="ChEBI" id="CHEBI:49883"/>
        <label>1</label>
    </ligand>
</feature>
<accession>A3D7P9</accession>
<keyword id="KW-0004">4Fe-4S</keyword>
<keyword id="KW-0963">Cytoplasm</keyword>
<keyword id="KW-0408">Iron</keyword>
<keyword id="KW-0411">Iron-sulfur</keyword>
<keyword id="KW-0479">Metal-binding</keyword>
<keyword id="KW-1185">Reference proteome</keyword>
<keyword id="KW-0949">S-adenosyl-L-methionine</keyword>
<keyword id="KW-0808">Transferase</keyword>
<comment type="function">
    <text evidence="1">Catalyzes the radical-mediated insertion of two sulfur atoms into the C-6 and C-8 positions of the octanoyl moiety bound to the lipoyl domains of lipoate-dependent enzymes, thereby converting the octanoylated domains into lipoylated derivatives.</text>
</comment>
<comment type="catalytic activity">
    <reaction evidence="1">
        <text>[[Fe-S] cluster scaffold protein carrying a second [4Fe-4S](2+) cluster] + N(6)-octanoyl-L-lysyl-[protein] + 2 oxidized [2Fe-2S]-[ferredoxin] + 2 S-adenosyl-L-methionine + 4 H(+) = [[Fe-S] cluster scaffold protein] + N(6)-[(R)-dihydrolipoyl]-L-lysyl-[protein] + 4 Fe(3+) + 2 hydrogen sulfide + 2 5'-deoxyadenosine + 2 L-methionine + 2 reduced [2Fe-2S]-[ferredoxin]</text>
        <dbReference type="Rhea" id="RHEA:16585"/>
        <dbReference type="Rhea" id="RHEA-COMP:9928"/>
        <dbReference type="Rhea" id="RHEA-COMP:10000"/>
        <dbReference type="Rhea" id="RHEA-COMP:10001"/>
        <dbReference type="Rhea" id="RHEA-COMP:10475"/>
        <dbReference type="Rhea" id="RHEA-COMP:14568"/>
        <dbReference type="Rhea" id="RHEA-COMP:14569"/>
        <dbReference type="ChEBI" id="CHEBI:15378"/>
        <dbReference type="ChEBI" id="CHEBI:17319"/>
        <dbReference type="ChEBI" id="CHEBI:29034"/>
        <dbReference type="ChEBI" id="CHEBI:29919"/>
        <dbReference type="ChEBI" id="CHEBI:33722"/>
        <dbReference type="ChEBI" id="CHEBI:33737"/>
        <dbReference type="ChEBI" id="CHEBI:33738"/>
        <dbReference type="ChEBI" id="CHEBI:57844"/>
        <dbReference type="ChEBI" id="CHEBI:59789"/>
        <dbReference type="ChEBI" id="CHEBI:78809"/>
        <dbReference type="ChEBI" id="CHEBI:83100"/>
        <dbReference type="EC" id="2.8.1.8"/>
    </reaction>
</comment>
<comment type="cofactor">
    <cofactor evidence="1">
        <name>[4Fe-4S] cluster</name>
        <dbReference type="ChEBI" id="CHEBI:49883"/>
    </cofactor>
    <text evidence="1">Binds 2 [4Fe-4S] clusters per subunit. One cluster is coordinated with 3 cysteines and an exchangeable S-adenosyl-L-methionine.</text>
</comment>
<comment type="pathway">
    <text evidence="1">Protein modification; protein lipoylation via endogenous pathway; protein N(6)-(lipoyl)lysine from octanoyl-[acyl-carrier-protein]: step 2/2.</text>
</comment>
<comment type="subcellular location">
    <subcellularLocation>
        <location evidence="1">Cytoplasm</location>
    </subcellularLocation>
</comment>
<comment type="similarity">
    <text evidence="1">Belongs to the radical SAM superfamily. Lipoyl synthase family.</text>
</comment>
<evidence type="ECO:0000255" key="1">
    <source>
        <dbReference type="HAMAP-Rule" id="MF_00206"/>
    </source>
</evidence>
<evidence type="ECO:0000255" key="2">
    <source>
        <dbReference type="PROSITE-ProRule" id="PRU01266"/>
    </source>
</evidence>